<name>YLK3_SCHPO</name>
<sequence>MPIDTPLIPHKPISRYRSGRLEGLESESSSESDYEEVSDSHDQENSISSSRHVITPVFEKEGISETKTSSNFQNINPVQTIDNSASEYETDASSAEGGSNSAASSSEEEDSSDSEYEMELRRRTLLLPPKFTSKVIKNRAKANEEDTEVLKKVTSQKILEETIKRELLLKETKNNNELLNDIDDTDGIDPQSEYELWKLRHLLRKKRDKEKSLELEREKMAIEERRLMNSEEREAQDLKDAEASRRGKKKSSMQFLQKYYHKGAFYQNEDIVSKRDYSEATEGEVLNKDLLPKPMQIRGDLFAKAGQTRWTHLANEDTTKEGSAWYDPKNPILQKNLHRLGGLHSDSPLSKRKRT</sequence>
<organism>
    <name type="scientific">Schizosaccharomyces pombe (strain 972 / ATCC 24843)</name>
    <name type="common">Fission yeast</name>
    <dbReference type="NCBI Taxonomy" id="284812"/>
    <lineage>
        <taxon>Eukaryota</taxon>
        <taxon>Fungi</taxon>
        <taxon>Dikarya</taxon>
        <taxon>Ascomycota</taxon>
        <taxon>Taphrinomycotina</taxon>
        <taxon>Schizosaccharomycetes</taxon>
        <taxon>Schizosaccharomycetales</taxon>
        <taxon>Schizosaccharomycetaceae</taxon>
        <taxon>Schizosaccharomyces</taxon>
    </lineage>
</organism>
<keyword id="KW-1185">Reference proteome</keyword>
<comment type="interaction">
    <interactant intactId="EBI-4421106">
        <id>Q9P7H6</id>
    </interactant>
    <interactant intactId="EBI-4408349">
        <id>Q09685</id>
        <label>dre4</label>
    </interactant>
    <organismsDiffer>false</organismsDiffer>
    <experiments>3</experiments>
</comment>
<comment type="interaction">
    <interactant intactId="EBI-4421106">
        <id>Q9P7H6</id>
    </interactant>
    <interactant intactId="EBI-590830">
        <id>O14011</id>
        <label>prp19</label>
    </interactant>
    <organismsDiffer>false</organismsDiffer>
    <experiments>2</experiments>
</comment>
<evidence type="ECO:0000256" key="1">
    <source>
        <dbReference type="SAM" id="MobiDB-lite"/>
    </source>
</evidence>
<protein>
    <recommendedName>
        <fullName>Uncharacterized protein C1782.03</fullName>
    </recommendedName>
</protein>
<accession>Q9P7H6</accession>
<feature type="chain" id="PRO_0000346779" description="Uncharacterized protein C1782.03">
    <location>
        <begin position="1"/>
        <end position="355"/>
    </location>
</feature>
<feature type="region of interest" description="Disordered" evidence="1">
    <location>
        <begin position="1"/>
        <end position="121"/>
    </location>
</feature>
<feature type="region of interest" description="Disordered" evidence="1">
    <location>
        <begin position="226"/>
        <end position="253"/>
    </location>
</feature>
<feature type="region of interest" description="Disordered" evidence="1">
    <location>
        <begin position="336"/>
        <end position="355"/>
    </location>
</feature>
<feature type="compositionally biased region" description="Acidic residues" evidence="1">
    <location>
        <begin position="24"/>
        <end position="37"/>
    </location>
</feature>
<feature type="compositionally biased region" description="Polar residues" evidence="1">
    <location>
        <begin position="65"/>
        <end position="87"/>
    </location>
</feature>
<feature type="compositionally biased region" description="Low complexity" evidence="1">
    <location>
        <begin position="91"/>
        <end position="105"/>
    </location>
</feature>
<feature type="compositionally biased region" description="Acidic residues" evidence="1">
    <location>
        <begin position="106"/>
        <end position="117"/>
    </location>
</feature>
<feature type="compositionally biased region" description="Basic and acidic residues" evidence="1">
    <location>
        <begin position="226"/>
        <end position="245"/>
    </location>
</feature>
<gene>
    <name type="ORF">SPAC1782.03</name>
</gene>
<proteinExistence type="evidence at protein level"/>
<reference key="1">
    <citation type="journal article" date="2002" name="Nature">
        <title>The genome sequence of Schizosaccharomyces pombe.</title>
        <authorList>
            <person name="Wood V."/>
            <person name="Gwilliam R."/>
            <person name="Rajandream M.A."/>
            <person name="Lyne M.H."/>
            <person name="Lyne R."/>
            <person name="Stewart A."/>
            <person name="Sgouros J.G."/>
            <person name="Peat N."/>
            <person name="Hayles J."/>
            <person name="Baker S.G."/>
            <person name="Basham D."/>
            <person name="Bowman S."/>
            <person name="Brooks K."/>
            <person name="Brown D."/>
            <person name="Brown S."/>
            <person name="Chillingworth T."/>
            <person name="Churcher C.M."/>
            <person name="Collins M."/>
            <person name="Connor R."/>
            <person name="Cronin A."/>
            <person name="Davis P."/>
            <person name="Feltwell T."/>
            <person name="Fraser A."/>
            <person name="Gentles S."/>
            <person name="Goble A."/>
            <person name="Hamlin N."/>
            <person name="Harris D.E."/>
            <person name="Hidalgo J."/>
            <person name="Hodgson G."/>
            <person name="Holroyd S."/>
            <person name="Hornsby T."/>
            <person name="Howarth S."/>
            <person name="Huckle E.J."/>
            <person name="Hunt S."/>
            <person name="Jagels K."/>
            <person name="James K.D."/>
            <person name="Jones L."/>
            <person name="Jones M."/>
            <person name="Leather S."/>
            <person name="McDonald S."/>
            <person name="McLean J."/>
            <person name="Mooney P."/>
            <person name="Moule S."/>
            <person name="Mungall K.L."/>
            <person name="Murphy L.D."/>
            <person name="Niblett D."/>
            <person name="Odell C."/>
            <person name="Oliver K."/>
            <person name="O'Neil S."/>
            <person name="Pearson D."/>
            <person name="Quail M.A."/>
            <person name="Rabbinowitsch E."/>
            <person name="Rutherford K.M."/>
            <person name="Rutter S."/>
            <person name="Saunders D."/>
            <person name="Seeger K."/>
            <person name="Sharp S."/>
            <person name="Skelton J."/>
            <person name="Simmonds M.N."/>
            <person name="Squares R."/>
            <person name="Squares S."/>
            <person name="Stevens K."/>
            <person name="Taylor K."/>
            <person name="Taylor R.G."/>
            <person name="Tivey A."/>
            <person name="Walsh S.V."/>
            <person name="Warren T."/>
            <person name="Whitehead S."/>
            <person name="Woodward J.R."/>
            <person name="Volckaert G."/>
            <person name="Aert R."/>
            <person name="Robben J."/>
            <person name="Grymonprez B."/>
            <person name="Weltjens I."/>
            <person name="Vanstreels E."/>
            <person name="Rieger M."/>
            <person name="Schaefer M."/>
            <person name="Mueller-Auer S."/>
            <person name="Gabel C."/>
            <person name="Fuchs M."/>
            <person name="Duesterhoeft A."/>
            <person name="Fritzc C."/>
            <person name="Holzer E."/>
            <person name="Moestl D."/>
            <person name="Hilbert H."/>
            <person name="Borzym K."/>
            <person name="Langer I."/>
            <person name="Beck A."/>
            <person name="Lehrach H."/>
            <person name="Reinhardt R."/>
            <person name="Pohl T.M."/>
            <person name="Eger P."/>
            <person name="Zimmermann W."/>
            <person name="Wedler H."/>
            <person name="Wambutt R."/>
            <person name="Purnelle B."/>
            <person name="Goffeau A."/>
            <person name="Cadieu E."/>
            <person name="Dreano S."/>
            <person name="Gloux S."/>
            <person name="Lelaure V."/>
            <person name="Mottier S."/>
            <person name="Galibert F."/>
            <person name="Aves S.J."/>
            <person name="Xiang Z."/>
            <person name="Hunt C."/>
            <person name="Moore K."/>
            <person name="Hurst S.M."/>
            <person name="Lucas M."/>
            <person name="Rochet M."/>
            <person name="Gaillardin C."/>
            <person name="Tallada V.A."/>
            <person name="Garzon A."/>
            <person name="Thode G."/>
            <person name="Daga R.R."/>
            <person name="Cruzado L."/>
            <person name="Jimenez J."/>
            <person name="Sanchez M."/>
            <person name="del Rey F."/>
            <person name="Benito J."/>
            <person name="Dominguez A."/>
            <person name="Revuelta J.L."/>
            <person name="Moreno S."/>
            <person name="Armstrong J."/>
            <person name="Forsburg S.L."/>
            <person name="Cerutti L."/>
            <person name="Lowe T."/>
            <person name="McCombie W.R."/>
            <person name="Paulsen I."/>
            <person name="Potashkin J."/>
            <person name="Shpakovski G.V."/>
            <person name="Ussery D."/>
            <person name="Barrell B.G."/>
            <person name="Nurse P."/>
        </authorList>
    </citation>
    <scope>NUCLEOTIDE SEQUENCE [LARGE SCALE GENOMIC DNA]</scope>
    <source>
        <strain>972 / ATCC 24843</strain>
    </source>
</reference>
<dbReference type="EMBL" id="CU329670">
    <property type="protein sequence ID" value="CAB76265.1"/>
    <property type="molecule type" value="Genomic_DNA"/>
</dbReference>
<dbReference type="PIR" id="T50093">
    <property type="entry name" value="T50093"/>
</dbReference>
<dbReference type="SMR" id="Q9P7H6"/>
<dbReference type="BioGRID" id="278813">
    <property type="interactions" value="40"/>
</dbReference>
<dbReference type="FunCoup" id="Q9P7H6">
    <property type="interactions" value="45"/>
</dbReference>
<dbReference type="IntAct" id="Q9P7H6">
    <property type="interactions" value="28"/>
</dbReference>
<dbReference type="STRING" id="284812.Q9P7H6"/>
<dbReference type="iPTMnet" id="Q9P7H6"/>
<dbReference type="PaxDb" id="4896-SPAC1782.03.1"/>
<dbReference type="EnsemblFungi" id="SPAC1782.03.1">
    <property type="protein sequence ID" value="SPAC1782.03.1:pep"/>
    <property type="gene ID" value="SPAC1782.03"/>
</dbReference>
<dbReference type="KEGG" id="spo:2542348"/>
<dbReference type="PomBase" id="SPAC1782.03"/>
<dbReference type="VEuPathDB" id="FungiDB:SPAC1782.03"/>
<dbReference type="eggNOG" id="KOG1425">
    <property type="taxonomic scope" value="Eukaryota"/>
</dbReference>
<dbReference type="HOGENOM" id="CLU_022379_1_1_1"/>
<dbReference type="InParanoid" id="Q9P7H6"/>
<dbReference type="OMA" id="YRDMKTE"/>
<dbReference type="PhylomeDB" id="Q9P7H6"/>
<dbReference type="PRO" id="PR:Q9P7H6"/>
<dbReference type="Proteomes" id="UP000002485">
    <property type="component" value="Chromosome I"/>
</dbReference>
<dbReference type="GO" id="GO:0005684">
    <property type="term" value="C:U2-type spliceosomal complex"/>
    <property type="evidence" value="ECO:0000314"/>
    <property type="project" value="PomBase"/>
</dbReference>
<dbReference type="GO" id="GO:0045292">
    <property type="term" value="P:mRNA cis splicing, via spliceosome"/>
    <property type="evidence" value="ECO:0000315"/>
    <property type="project" value="PomBase"/>
</dbReference>
<dbReference type="GO" id="GO:0000398">
    <property type="term" value="P:mRNA splicing, via spliceosome"/>
    <property type="evidence" value="ECO:0000318"/>
    <property type="project" value="GO_Central"/>
</dbReference>
<dbReference type="InterPro" id="IPR033194">
    <property type="entry name" value="MFAP1"/>
</dbReference>
<dbReference type="InterPro" id="IPR009730">
    <property type="entry name" value="MFAP1_C"/>
</dbReference>
<dbReference type="PANTHER" id="PTHR15327">
    <property type="entry name" value="MICROFIBRIL-ASSOCIATED PROTEIN"/>
    <property type="match status" value="1"/>
</dbReference>
<dbReference type="Pfam" id="PF06991">
    <property type="entry name" value="MFAP1"/>
    <property type="match status" value="1"/>
</dbReference>